<name>RL30_BACHK</name>
<accession>Q6HPP0</accession>
<comment type="subunit">
    <text evidence="1">Part of the 50S ribosomal subunit.</text>
</comment>
<comment type="similarity">
    <text evidence="1">Belongs to the universal ribosomal protein uL30 family.</text>
</comment>
<sequence length="60" mass="6556">MAKKLEITLTRSVIGRPQDQRATVEALGLKKLNSTVVKEETPAILGMINKVSHLVTVKEA</sequence>
<proteinExistence type="inferred from homology"/>
<keyword id="KW-0687">Ribonucleoprotein</keyword>
<keyword id="KW-0689">Ribosomal protein</keyword>
<reference key="1">
    <citation type="journal article" date="2006" name="J. Bacteriol.">
        <title>Pathogenomic sequence analysis of Bacillus cereus and Bacillus thuringiensis isolates closely related to Bacillus anthracis.</title>
        <authorList>
            <person name="Han C.S."/>
            <person name="Xie G."/>
            <person name="Challacombe J.F."/>
            <person name="Altherr M.R."/>
            <person name="Bhotika S.S."/>
            <person name="Bruce D."/>
            <person name="Campbell C.S."/>
            <person name="Campbell M.L."/>
            <person name="Chen J."/>
            <person name="Chertkov O."/>
            <person name="Cleland C."/>
            <person name="Dimitrijevic M."/>
            <person name="Doggett N.A."/>
            <person name="Fawcett J.J."/>
            <person name="Glavina T."/>
            <person name="Goodwin L.A."/>
            <person name="Hill K.K."/>
            <person name="Hitchcock P."/>
            <person name="Jackson P.J."/>
            <person name="Keim P."/>
            <person name="Kewalramani A.R."/>
            <person name="Longmire J."/>
            <person name="Lucas S."/>
            <person name="Malfatti S."/>
            <person name="McMurry K."/>
            <person name="Meincke L.J."/>
            <person name="Misra M."/>
            <person name="Moseman B.L."/>
            <person name="Mundt M."/>
            <person name="Munk A.C."/>
            <person name="Okinaka R.T."/>
            <person name="Parson-Quintana B."/>
            <person name="Reilly L.P."/>
            <person name="Richardson P."/>
            <person name="Robinson D.L."/>
            <person name="Rubin E."/>
            <person name="Saunders E."/>
            <person name="Tapia R."/>
            <person name="Tesmer J.G."/>
            <person name="Thayer N."/>
            <person name="Thompson L.S."/>
            <person name="Tice H."/>
            <person name="Ticknor L.O."/>
            <person name="Wills P.L."/>
            <person name="Brettin T.S."/>
            <person name="Gilna P."/>
        </authorList>
    </citation>
    <scope>NUCLEOTIDE SEQUENCE [LARGE SCALE GENOMIC DNA]</scope>
    <source>
        <strain>97-27</strain>
    </source>
</reference>
<gene>
    <name evidence="1" type="primary">rpmD</name>
    <name type="ordered locus">BT9727_0124</name>
</gene>
<feature type="chain" id="PRO_0000273745" description="Large ribosomal subunit protein uL30">
    <location>
        <begin position="1"/>
        <end position="60"/>
    </location>
</feature>
<evidence type="ECO:0000255" key="1">
    <source>
        <dbReference type="HAMAP-Rule" id="MF_01371"/>
    </source>
</evidence>
<evidence type="ECO:0000305" key="2"/>
<organism>
    <name type="scientific">Bacillus thuringiensis subsp. konkukian (strain 97-27)</name>
    <dbReference type="NCBI Taxonomy" id="281309"/>
    <lineage>
        <taxon>Bacteria</taxon>
        <taxon>Bacillati</taxon>
        <taxon>Bacillota</taxon>
        <taxon>Bacilli</taxon>
        <taxon>Bacillales</taxon>
        <taxon>Bacillaceae</taxon>
        <taxon>Bacillus</taxon>
        <taxon>Bacillus cereus group</taxon>
    </lineage>
</organism>
<dbReference type="EMBL" id="AE017355">
    <property type="protein sequence ID" value="AAT63883.1"/>
    <property type="molecule type" value="Genomic_DNA"/>
</dbReference>
<dbReference type="RefSeq" id="WP_001085234.1">
    <property type="nucleotide sequence ID" value="NC_005957.1"/>
</dbReference>
<dbReference type="RefSeq" id="YP_034480.1">
    <property type="nucleotide sequence ID" value="NC_005957.1"/>
</dbReference>
<dbReference type="SMR" id="Q6HPP0"/>
<dbReference type="GeneID" id="93010925"/>
<dbReference type="KEGG" id="btk:BT9727_0124"/>
<dbReference type="PATRIC" id="fig|281309.8.peg.125"/>
<dbReference type="HOGENOM" id="CLU_131047_2_1_9"/>
<dbReference type="PRO" id="PR:Q6HPP0"/>
<dbReference type="Proteomes" id="UP000001301">
    <property type="component" value="Chromosome"/>
</dbReference>
<dbReference type="GO" id="GO:0022625">
    <property type="term" value="C:cytosolic large ribosomal subunit"/>
    <property type="evidence" value="ECO:0007669"/>
    <property type="project" value="TreeGrafter"/>
</dbReference>
<dbReference type="GO" id="GO:0003735">
    <property type="term" value="F:structural constituent of ribosome"/>
    <property type="evidence" value="ECO:0007669"/>
    <property type="project" value="InterPro"/>
</dbReference>
<dbReference type="GO" id="GO:0006412">
    <property type="term" value="P:translation"/>
    <property type="evidence" value="ECO:0007669"/>
    <property type="project" value="UniProtKB-UniRule"/>
</dbReference>
<dbReference type="CDD" id="cd01658">
    <property type="entry name" value="Ribosomal_L30"/>
    <property type="match status" value="1"/>
</dbReference>
<dbReference type="FunFam" id="3.30.1390.20:FF:000001">
    <property type="entry name" value="50S ribosomal protein L30"/>
    <property type="match status" value="1"/>
</dbReference>
<dbReference type="Gene3D" id="3.30.1390.20">
    <property type="entry name" value="Ribosomal protein L30, ferredoxin-like fold domain"/>
    <property type="match status" value="1"/>
</dbReference>
<dbReference type="HAMAP" id="MF_01371_B">
    <property type="entry name" value="Ribosomal_uL30_B"/>
    <property type="match status" value="1"/>
</dbReference>
<dbReference type="InterPro" id="IPR036919">
    <property type="entry name" value="Ribo_uL30_ferredoxin-like_sf"/>
</dbReference>
<dbReference type="InterPro" id="IPR005996">
    <property type="entry name" value="Ribosomal_uL30_bac-type"/>
</dbReference>
<dbReference type="InterPro" id="IPR018038">
    <property type="entry name" value="Ribosomal_uL30_CS"/>
</dbReference>
<dbReference type="InterPro" id="IPR016082">
    <property type="entry name" value="Ribosomal_uL30_ferredoxin-like"/>
</dbReference>
<dbReference type="NCBIfam" id="TIGR01308">
    <property type="entry name" value="rpmD_bact"/>
    <property type="match status" value="1"/>
</dbReference>
<dbReference type="PANTHER" id="PTHR15892:SF2">
    <property type="entry name" value="LARGE RIBOSOMAL SUBUNIT PROTEIN UL30M"/>
    <property type="match status" value="1"/>
</dbReference>
<dbReference type="PANTHER" id="PTHR15892">
    <property type="entry name" value="MITOCHONDRIAL RIBOSOMAL PROTEIN L30"/>
    <property type="match status" value="1"/>
</dbReference>
<dbReference type="Pfam" id="PF00327">
    <property type="entry name" value="Ribosomal_L30"/>
    <property type="match status" value="1"/>
</dbReference>
<dbReference type="PIRSF" id="PIRSF002211">
    <property type="entry name" value="Ribosomal_L30_bac-type"/>
    <property type="match status" value="1"/>
</dbReference>
<dbReference type="SUPFAM" id="SSF55129">
    <property type="entry name" value="Ribosomal protein L30p/L7e"/>
    <property type="match status" value="1"/>
</dbReference>
<dbReference type="PROSITE" id="PS00634">
    <property type="entry name" value="RIBOSOMAL_L30"/>
    <property type="match status" value="1"/>
</dbReference>
<protein>
    <recommendedName>
        <fullName evidence="1">Large ribosomal subunit protein uL30</fullName>
    </recommendedName>
    <alternativeName>
        <fullName evidence="2">50S ribosomal protein L30</fullName>
    </alternativeName>
</protein>